<name>RUTA_METEA</name>
<dbReference type="EC" id="1.14.99.46" evidence="1"/>
<dbReference type="EMBL" id="CP001510">
    <property type="protein sequence ID" value="ACS39513.1"/>
    <property type="molecule type" value="Genomic_DNA"/>
</dbReference>
<dbReference type="RefSeq" id="WP_012752596.1">
    <property type="nucleotide sequence ID" value="NC_012808.1"/>
</dbReference>
<dbReference type="SMR" id="C5B0U9"/>
<dbReference type="STRING" id="272630.MexAM1_META1p1664"/>
<dbReference type="KEGG" id="mea:Mex_1p1664"/>
<dbReference type="eggNOG" id="COG2141">
    <property type="taxonomic scope" value="Bacteria"/>
</dbReference>
<dbReference type="HOGENOM" id="CLU_027853_1_1_5"/>
<dbReference type="OrthoDB" id="9814695at2"/>
<dbReference type="Proteomes" id="UP000009081">
    <property type="component" value="Chromosome"/>
</dbReference>
<dbReference type="GO" id="GO:0008726">
    <property type="term" value="F:alkanesulfonate monooxygenase activity"/>
    <property type="evidence" value="ECO:0007669"/>
    <property type="project" value="TreeGrafter"/>
</dbReference>
<dbReference type="GO" id="GO:0052614">
    <property type="term" value="F:uracil oxygenase activity"/>
    <property type="evidence" value="ECO:0007669"/>
    <property type="project" value="UniProtKB-EC"/>
</dbReference>
<dbReference type="GO" id="GO:0046306">
    <property type="term" value="P:alkanesulfonate catabolic process"/>
    <property type="evidence" value="ECO:0007669"/>
    <property type="project" value="TreeGrafter"/>
</dbReference>
<dbReference type="GO" id="GO:0019740">
    <property type="term" value="P:nitrogen utilization"/>
    <property type="evidence" value="ECO:0007669"/>
    <property type="project" value="UniProtKB-UniRule"/>
</dbReference>
<dbReference type="GO" id="GO:0006212">
    <property type="term" value="P:uracil catabolic process"/>
    <property type="evidence" value="ECO:0007669"/>
    <property type="project" value="UniProtKB-UniRule"/>
</dbReference>
<dbReference type="CDD" id="cd01094">
    <property type="entry name" value="Alkanesulfonate_monoxygenase"/>
    <property type="match status" value="1"/>
</dbReference>
<dbReference type="FunFam" id="3.20.20.30:FF:000003">
    <property type="entry name" value="Pyrimidine monooxygenase RutA"/>
    <property type="match status" value="1"/>
</dbReference>
<dbReference type="Gene3D" id="3.20.20.30">
    <property type="entry name" value="Luciferase-like domain"/>
    <property type="match status" value="1"/>
</dbReference>
<dbReference type="HAMAP" id="MF_01699">
    <property type="entry name" value="RutA"/>
    <property type="match status" value="1"/>
</dbReference>
<dbReference type="InterPro" id="IPR011251">
    <property type="entry name" value="Luciferase-like_dom"/>
</dbReference>
<dbReference type="InterPro" id="IPR036661">
    <property type="entry name" value="Luciferase-like_sf"/>
</dbReference>
<dbReference type="InterPro" id="IPR019914">
    <property type="entry name" value="Pyrimidine_monooxygenase_RutA"/>
</dbReference>
<dbReference type="InterPro" id="IPR050172">
    <property type="entry name" value="SsuD_RutA_monooxygenase"/>
</dbReference>
<dbReference type="NCBIfam" id="TIGR03612">
    <property type="entry name" value="RutA"/>
    <property type="match status" value="1"/>
</dbReference>
<dbReference type="PANTHER" id="PTHR42847">
    <property type="entry name" value="ALKANESULFONATE MONOOXYGENASE"/>
    <property type="match status" value="1"/>
</dbReference>
<dbReference type="PANTHER" id="PTHR42847:SF4">
    <property type="entry name" value="ALKANESULFONATE MONOOXYGENASE-RELATED"/>
    <property type="match status" value="1"/>
</dbReference>
<dbReference type="Pfam" id="PF00296">
    <property type="entry name" value="Bac_luciferase"/>
    <property type="match status" value="1"/>
</dbReference>
<dbReference type="SUPFAM" id="SSF51679">
    <property type="entry name" value="Bacterial luciferase-like"/>
    <property type="match status" value="1"/>
</dbReference>
<comment type="function">
    <text evidence="1">Catalyzes the pyrimidine ring opening between N-3 and C-4 by an unusual flavin hydroperoxide-catalyzed mechanism, adding oxygen atoms in the process to yield ureidoacrylate peracid, that immediately reacts with FMN forming ureidoacrylate and FMN-N(5)-oxide. The FMN-N(5)-oxide reacts spontaneously with NADH to produce FMN. Requires the flavin reductase RutF to regenerate FMN in vivo.</text>
</comment>
<comment type="catalytic activity">
    <reaction evidence="1">
        <text>uracil + FMNH2 + NADH + O2 = (Z)-3-ureidoacrylate + FMN + NAD(+) + H2O + H(+)</text>
        <dbReference type="Rhea" id="RHEA:31587"/>
        <dbReference type="ChEBI" id="CHEBI:15377"/>
        <dbReference type="ChEBI" id="CHEBI:15378"/>
        <dbReference type="ChEBI" id="CHEBI:15379"/>
        <dbReference type="ChEBI" id="CHEBI:17568"/>
        <dbReference type="ChEBI" id="CHEBI:57540"/>
        <dbReference type="ChEBI" id="CHEBI:57618"/>
        <dbReference type="ChEBI" id="CHEBI:57945"/>
        <dbReference type="ChEBI" id="CHEBI:58210"/>
        <dbReference type="ChEBI" id="CHEBI:59891"/>
        <dbReference type="EC" id="1.14.99.46"/>
    </reaction>
</comment>
<comment type="catalytic activity">
    <reaction evidence="1">
        <text>thymine + FMNH2 + NADH + O2 = (Z)-2-methylureidoacrylate + FMN + NAD(+) + H2O + H(+)</text>
        <dbReference type="Rhea" id="RHEA:31599"/>
        <dbReference type="ChEBI" id="CHEBI:15377"/>
        <dbReference type="ChEBI" id="CHEBI:15378"/>
        <dbReference type="ChEBI" id="CHEBI:15379"/>
        <dbReference type="ChEBI" id="CHEBI:17821"/>
        <dbReference type="ChEBI" id="CHEBI:57540"/>
        <dbReference type="ChEBI" id="CHEBI:57618"/>
        <dbReference type="ChEBI" id="CHEBI:57945"/>
        <dbReference type="ChEBI" id="CHEBI:58210"/>
        <dbReference type="ChEBI" id="CHEBI:143783"/>
        <dbReference type="EC" id="1.14.99.46"/>
    </reaction>
</comment>
<comment type="similarity">
    <text evidence="1">Belongs to the NtaA/SnaA/DszA monooxygenase family. RutA subfamily.</text>
</comment>
<gene>
    <name evidence="1" type="primary">rutA</name>
    <name type="ordered locus">MexAM1_META1p1664</name>
</gene>
<sequence length="364" mass="40039">MNIGVFIPIGNNGWLLSENAPQYMPSFELNKQITLKAEQHGLDFVLSMIKLRGFGGKTEFWDHNLESFTLMAGLAAVTSRIKLYATAPTLCLPPAIVARMASTIDSISNGRFGLNLVTGWQRPEYAQMGLWPGDEYFGRRYEYLSEYAQVLRELWETGRSDLKGEFFQMEDCRLSPRPQAEMKIICAGQSTAGMEFTATYADYNFCFGKGVNTPTAFAPTVERLEEAKAKTGRDVSSYVLFMVISDETDEAARAKWEHYKAGADAEAFAWLGLQGAADTKSGADTNIRQMADPTSAVNINMGTLVGSHATVAALLDEVVTVPGTGGVLLVFDDFLKGLDDFGTKIQPLMRSRRHVTGEMLAEVA</sequence>
<feature type="chain" id="PRO_0000402629" description="Pyrimidine monooxygenase RutA">
    <location>
        <begin position="1"/>
        <end position="364"/>
    </location>
</feature>
<feature type="binding site" evidence="1">
    <location>
        <begin position="49"/>
        <end position="50"/>
    </location>
    <ligand>
        <name>FMN</name>
        <dbReference type="ChEBI" id="CHEBI:58210"/>
    </ligand>
</feature>
<feature type="binding site" evidence="1">
    <location>
        <position position="115"/>
    </location>
    <ligand>
        <name>FMN</name>
        <dbReference type="ChEBI" id="CHEBI:58210"/>
    </ligand>
</feature>
<feature type="binding site" evidence="1">
    <location>
        <position position="124"/>
    </location>
    <ligand>
        <name>FMN</name>
        <dbReference type="ChEBI" id="CHEBI:58210"/>
    </ligand>
</feature>
<feature type="binding site" evidence="1">
    <location>
        <begin position="140"/>
        <end position="141"/>
    </location>
    <ligand>
        <name>FMN</name>
        <dbReference type="ChEBI" id="CHEBI:58210"/>
    </ligand>
</feature>
<feature type="binding site" evidence="1">
    <location>
        <position position="190"/>
    </location>
    <ligand>
        <name>FMN</name>
        <dbReference type="ChEBI" id="CHEBI:58210"/>
    </ligand>
</feature>
<reference key="1">
    <citation type="journal article" date="2009" name="PLoS ONE">
        <title>Methylobacterium genome sequences: a reference blueprint to investigate microbial metabolism of C1 compounds from natural and industrial sources.</title>
        <authorList>
            <person name="Vuilleumier S."/>
            <person name="Chistoserdova L."/>
            <person name="Lee M.-C."/>
            <person name="Bringel F."/>
            <person name="Lajus A."/>
            <person name="Zhou Y."/>
            <person name="Gourion B."/>
            <person name="Barbe V."/>
            <person name="Chang J."/>
            <person name="Cruveiller S."/>
            <person name="Dossat C."/>
            <person name="Gillett W."/>
            <person name="Gruffaz C."/>
            <person name="Haugen E."/>
            <person name="Hourcade E."/>
            <person name="Levy R."/>
            <person name="Mangenot S."/>
            <person name="Muller E."/>
            <person name="Nadalig T."/>
            <person name="Pagni M."/>
            <person name="Penny C."/>
            <person name="Peyraud R."/>
            <person name="Robinson D.G."/>
            <person name="Roche D."/>
            <person name="Rouy Z."/>
            <person name="Saenampechek C."/>
            <person name="Salvignol G."/>
            <person name="Vallenet D."/>
            <person name="Wu Z."/>
            <person name="Marx C.J."/>
            <person name="Vorholt J.A."/>
            <person name="Olson M.V."/>
            <person name="Kaul R."/>
            <person name="Weissenbach J."/>
            <person name="Medigue C."/>
            <person name="Lidstrom M.E."/>
        </authorList>
    </citation>
    <scope>NUCLEOTIDE SEQUENCE [LARGE SCALE GENOMIC DNA]</scope>
    <source>
        <strain>ATCC 14718 / DSM 1338 / JCM 2805 / NCIMB 9133 / AM1</strain>
    </source>
</reference>
<accession>C5B0U9</accession>
<proteinExistence type="inferred from homology"/>
<organism>
    <name type="scientific">Methylorubrum extorquens (strain ATCC 14718 / DSM 1338 / JCM 2805 / NCIMB 9133 / AM1)</name>
    <name type="common">Methylobacterium extorquens</name>
    <dbReference type="NCBI Taxonomy" id="272630"/>
    <lineage>
        <taxon>Bacteria</taxon>
        <taxon>Pseudomonadati</taxon>
        <taxon>Pseudomonadota</taxon>
        <taxon>Alphaproteobacteria</taxon>
        <taxon>Hyphomicrobiales</taxon>
        <taxon>Methylobacteriaceae</taxon>
        <taxon>Methylorubrum</taxon>
    </lineage>
</organism>
<protein>
    <recommendedName>
        <fullName evidence="1">Pyrimidine monooxygenase RutA</fullName>
        <ecNumber evidence="1">1.14.99.46</ecNumber>
    </recommendedName>
</protein>
<keyword id="KW-0285">Flavoprotein</keyword>
<keyword id="KW-0288">FMN</keyword>
<keyword id="KW-0503">Monooxygenase</keyword>
<keyword id="KW-0521">NADP</keyword>
<keyword id="KW-0560">Oxidoreductase</keyword>
<keyword id="KW-1185">Reference proteome</keyword>
<evidence type="ECO:0000255" key="1">
    <source>
        <dbReference type="HAMAP-Rule" id="MF_01699"/>
    </source>
</evidence>